<gene>
    <name evidence="1" type="primary">ispE</name>
    <name type="ordered locus">BCE33L0040</name>
</gene>
<reference key="1">
    <citation type="journal article" date="2006" name="J. Bacteriol.">
        <title>Pathogenomic sequence analysis of Bacillus cereus and Bacillus thuringiensis isolates closely related to Bacillus anthracis.</title>
        <authorList>
            <person name="Han C.S."/>
            <person name="Xie G."/>
            <person name="Challacombe J.F."/>
            <person name="Altherr M.R."/>
            <person name="Bhotika S.S."/>
            <person name="Bruce D."/>
            <person name="Campbell C.S."/>
            <person name="Campbell M.L."/>
            <person name="Chen J."/>
            <person name="Chertkov O."/>
            <person name="Cleland C."/>
            <person name="Dimitrijevic M."/>
            <person name="Doggett N.A."/>
            <person name="Fawcett J.J."/>
            <person name="Glavina T."/>
            <person name="Goodwin L.A."/>
            <person name="Hill K.K."/>
            <person name="Hitchcock P."/>
            <person name="Jackson P.J."/>
            <person name="Keim P."/>
            <person name="Kewalramani A.R."/>
            <person name="Longmire J."/>
            <person name="Lucas S."/>
            <person name="Malfatti S."/>
            <person name="McMurry K."/>
            <person name="Meincke L.J."/>
            <person name="Misra M."/>
            <person name="Moseman B.L."/>
            <person name="Mundt M."/>
            <person name="Munk A.C."/>
            <person name="Okinaka R.T."/>
            <person name="Parson-Quintana B."/>
            <person name="Reilly L.P."/>
            <person name="Richardson P."/>
            <person name="Robinson D.L."/>
            <person name="Rubin E."/>
            <person name="Saunders E."/>
            <person name="Tapia R."/>
            <person name="Tesmer J.G."/>
            <person name="Thayer N."/>
            <person name="Thompson L.S."/>
            <person name="Tice H."/>
            <person name="Ticknor L.O."/>
            <person name="Wills P.L."/>
            <person name="Brettin T.S."/>
            <person name="Gilna P."/>
        </authorList>
    </citation>
    <scope>NUCLEOTIDE SEQUENCE [LARGE SCALE GENOMIC DNA]</scope>
    <source>
        <strain>ZK / E33L</strain>
    </source>
</reference>
<organism>
    <name type="scientific">Bacillus cereus (strain ZK / E33L)</name>
    <dbReference type="NCBI Taxonomy" id="288681"/>
    <lineage>
        <taxon>Bacteria</taxon>
        <taxon>Bacillati</taxon>
        <taxon>Bacillota</taxon>
        <taxon>Bacilli</taxon>
        <taxon>Bacillales</taxon>
        <taxon>Bacillaceae</taxon>
        <taxon>Bacillus</taxon>
        <taxon>Bacillus cereus group</taxon>
    </lineage>
</organism>
<keyword id="KW-0067">ATP-binding</keyword>
<keyword id="KW-0414">Isoprene biosynthesis</keyword>
<keyword id="KW-0418">Kinase</keyword>
<keyword id="KW-0547">Nucleotide-binding</keyword>
<keyword id="KW-0808">Transferase</keyword>
<name>ISPE_BACCZ</name>
<evidence type="ECO:0000255" key="1">
    <source>
        <dbReference type="HAMAP-Rule" id="MF_00061"/>
    </source>
</evidence>
<comment type="function">
    <text evidence="1">Catalyzes the phosphorylation of the position 2 hydroxy group of 4-diphosphocytidyl-2C-methyl-D-erythritol.</text>
</comment>
<comment type="catalytic activity">
    <reaction evidence="1">
        <text>4-CDP-2-C-methyl-D-erythritol + ATP = 4-CDP-2-C-methyl-D-erythritol 2-phosphate + ADP + H(+)</text>
        <dbReference type="Rhea" id="RHEA:18437"/>
        <dbReference type="ChEBI" id="CHEBI:15378"/>
        <dbReference type="ChEBI" id="CHEBI:30616"/>
        <dbReference type="ChEBI" id="CHEBI:57823"/>
        <dbReference type="ChEBI" id="CHEBI:57919"/>
        <dbReference type="ChEBI" id="CHEBI:456216"/>
        <dbReference type="EC" id="2.7.1.148"/>
    </reaction>
</comment>
<comment type="pathway">
    <text evidence="1">Isoprenoid biosynthesis; isopentenyl diphosphate biosynthesis via DXP pathway; isopentenyl diphosphate from 1-deoxy-D-xylulose 5-phosphate: step 3/6.</text>
</comment>
<comment type="similarity">
    <text evidence="1">Belongs to the GHMP kinase family. IspE subfamily.</text>
</comment>
<protein>
    <recommendedName>
        <fullName evidence="1">4-diphosphocytidyl-2-C-methyl-D-erythritol kinase</fullName>
        <shortName evidence="1">CMK</shortName>
        <ecNumber evidence="1">2.7.1.148</ecNumber>
    </recommendedName>
    <alternativeName>
        <fullName evidence="1">4-(cytidine-5'-diphospho)-2-C-methyl-D-erythritol kinase</fullName>
    </alternativeName>
</protein>
<proteinExistence type="inferred from homology"/>
<sequence>MNRLKLLVKAPAKINLSLDVLGKRQDGYHEVKMIMTTIDLADRLELMELAEDRIEILSHNRYVPDDQRNLAYQAAKLLKEKFNVKKGVSITIEKTIPVAAGLAGGSSDAAATLRGLNKLWNLGLTIDQLAELGAEIGSDVSFCVYGGTAIATGRGEQIEHIKTPPSCWVILAKPHIGVSTADVYGNLKLNRVTHPNVDKMVDVINAGDYKGICDTVGNVLEDVTFAMHPEVARIKAQMKRFGADAVLMSGSGPTVFGLVHHDSRMHRIYNGLKGFCEQVYAVRLLGERETLE</sequence>
<dbReference type="EC" id="2.7.1.148" evidence="1"/>
<dbReference type="EMBL" id="CP000001">
    <property type="protein sequence ID" value="AAU20190.1"/>
    <property type="molecule type" value="Genomic_DNA"/>
</dbReference>
<dbReference type="SMR" id="Q63HI8"/>
<dbReference type="KEGG" id="bcz:BCE33L0040"/>
<dbReference type="UniPathway" id="UPA00056">
    <property type="reaction ID" value="UER00094"/>
</dbReference>
<dbReference type="Proteomes" id="UP000002612">
    <property type="component" value="Chromosome"/>
</dbReference>
<dbReference type="GO" id="GO:0050515">
    <property type="term" value="F:4-(cytidine 5'-diphospho)-2-C-methyl-D-erythritol kinase activity"/>
    <property type="evidence" value="ECO:0007669"/>
    <property type="project" value="UniProtKB-UniRule"/>
</dbReference>
<dbReference type="GO" id="GO:0005524">
    <property type="term" value="F:ATP binding"/>
    <property type="evidence" value="ECO:0007669"/>
    <property type="project" value="UniProtKB-UniRule"/>
</dbReference>
<dbReference type="GO" id="GO:0019288">
    <property type="term" value="P:isopentenyl diphosphate biosynthetic process, methylerythritol 4-phosphate pathway"/>
    <property type="evidence" value="ECO:0007669"/>
    <property type="project" value="UniProtKB-UniRule"/>
</dbReference>
<dbReference type="GO" id="GO:0016114">
    <property type="term" value="P:terpenoid biosynthetic process"/>
    <property type="evidence" value="ECO:0007669"/>
    <property type="project" value="InterPro"/>
</dbReference>
<dbReference type="FunFam" id="3.30.230.10:FF:000029">
    <property type="entry name" value="4-diphosphocytidyl-2-C-methyl-D-erythritol kinase"/>
    <property type="match status" value="1"/>
</dbReference>
<dbReference type="FunFam" id="3.30.70.890:FF:000006">
    <property type="entry name" value="4-diphosphocytidyl-2-C-methyl-D-erythritol kinase"/>
    <property type="match status" value="1"/>
</dbReference>
<dbReference type="Gene3D" id="3.30.230.10">
    <property type="match status" value="1"/>
</dbReference>
<dbReference type="Gene3D" id="3.30.70.890">
    <property type="entry name" value="GHMP kinase, C-terminal domain"/>
    <property type="match status" value="1"/>
</dbReference>
<dbReference type="HAMAP" id="MF_00061">
    <property type="entry name" value="IspE"/>
    <property type="match status" value="1"/>
</dbReference>
<dbReference type="InterPro" id="IPR013750">
    <property type="entry name" value="GHMP_kinase_C_dom"/>
</dbReference>
<dbReference type="InterPro" id="IPR036554">
    <property type="entry name" value="GHMP_kinase_C_sf"/>
</dbReference>
<dbReference type="InterPro" id="IPR006204">
    <property type="entry name" value="GHMP_kinase_N_dom"/>
</dbReference>
<dbReference type="InterPro" id="IPR004424">
    <property type="entry name" value="IspE"/>
</dbReference>
<dbReference type="InterPro" id="IPR020568">
    <property type="entry name" value="Ribosomal_Su5_D2-typ_SF"/>
</dbReference>
<dbReference type="InterPro" id="IPR014721">
    <property type="entry name" value="Ribsml_uS5_D2-typ_fold_subgr"/>
</dbReference>
<dbReference type="NCBIfam" id="TIGR00154">
    <property type="entry name" value="ispE"/>
    <property type="match status" value="1"/>
</dbReference>
<dbReference type="NCBIfam" id="NF011202">
    <property type="entry name" value="PRK14608.1"/>
    <property type="match status" value="1"/>
</dbReference>
<dbReference type="PANTHER" id="PTHR43527">
    <property type="entry name" value="4-DIPHOSPHOCYTIDYL-2-C-METHYL-D-ERYTHRITOL KINASE, CHLOROPLASTIC"/>
    <property type="match status" value="1"/>
</dbReference>
<dbReference type="PANTHER" id="PTHR43527:SF2">
    <property type="entry name" value="4-DIPHOSPHOCYTIDYL-2-C-METHYL-D-ERYTHRITOL KINASE, CHLOROPLASTIC"/>
    <property type="match status" value="1"/>
</dbReference>
<dbReference type="Pfam" id="PF08544">
    <property type="entry name" value="GHMP_kinases_C"/>
    <property type="match status" value="1"/>
</dbReference>
<dbReference type="Pfam" id="PF00288">
    <property type="entry name" value="GHMP_kinases_N"/>
    <property type="match status" value="1"/>
</dbReference>
<dbReference type="PIRSF" id="PIRSF010376">
    <property type="entry name" value="IspE"/>
    <property type="match status" value="1"/>
</dbReference>
<dbReference type="SUPFAM" id="SSF55060">
    <property type="entry name" value="GHMP Kinase, C-terminal domain"/>
    <property type="match status" value="1"/>
</dbReference>
<dbReference type="SUPFAM" id="SSF54211">
    <property type="entry name" value="Ribosomal protein S5 domain 2-like"/>
    <property type="match status" value="1"/>
</dbReference>
<feature type="chain" id="PRO_0000235062" description="4-diphosphocytidyl-2-C-methyl-D-erythritol kinase">
    <location>
        <begin position="1"/>
        <end position="292"/>
    </location>
</feature>
<feature type="active site" evidence="1">
    <location>
        <position position="13"/>
    </location>
</feature>
<feature type="active site" evidence="1">
    <location>
        <position position="139"/>
    </location>
</feature>
<feature type="binding site" evidence="1">
    <location>
        <begin position="97"/>
        <end position="107"/>
    </location>
    <ligand>
        <name>ATP</name>
        <dbReference type="ChEBI" id="CHEBI:30616"/>
    </ligand>
</feature>
<accession>Q63HI8</accession>